<comment type="function">
    <text evidence="1">Involved in the biosynthesis of ADP-glucose, a building block required for the elongation reactions to produce glycogen. Catalyzes the reaction between ATP and alpha-D-glucose 1-phosphate (G1P) to produce pyrophosphate and ADP-Glc.</text>
</comment>
<comment type="catalytic activity">
    <reaction evidence="1">
        <text>alpha-D-glucose 1-phosphate + ATP + H(+) = ADP-alpha-D-glucose + diphosphate</text>
        <dbReference type="Rhea" id="RHEA:12120"/>
        <dbReference type="ChEBI" id="CHEBI:15378"/>
        <dbReference type="ChEBI" id="CHEBI:30616"/>
        <dbReference type="ChEBI" id="CHEBI:33019"/>
        <dbReference type="ChEBI" id="CHEBI:57498"/>
        <dbReference type="ChEBI" id="CHEBI:58601"/>
        <dbReference type="EC" id="2.7.7.27"/>
    </reaction>
</comment>
<comment type="pathway">
    <text evidence="1">Glycan biosynthesis; glycogen biosynthesis.</text>
</comment>
<comment type="subunit">
    <text evidence="1">Homotetramer.</text>
</comment>
<comment type="similarity">
    <text evidence="1">Belongs to the bacterial/plant glucose-1-phosphate adenylyltransferase family.</text>
</comment>
<accession>A6M331</accession>
<proteinExistence type="inferred from homology"/>
<protein>
    <recommendedName>
        <fullName evidence="1">Glucose-1-phosphate adenylyltransferase</fullName>
        <ecNumber evidence="1">2.7.7.27</ecNumber>
    </recommendedName>
    <alternativeName>
        <fullName evidence="1">ADP-glucose pyrophosphorylase</fullName>
        <shortName evidence="1">ADPGlc PPase</shortName>
    </alternativeName>
    <alternativeName>
        <fullName evidence="1">ADP-glucose synthase</fullName>
    </alternativeName>
</protein>
<keyword id="KW-0067">ATP-binding</keyword>
<keyword id="KW-0119">Carbohydrate metabolism</keyword>
<keyword id="KW-0320">Glycogen biosynthesis</keyword>
<keyword id="KW-0321">Glycogen metabolism</keyword>
<keyword id="KW-0547">Nucleotide-binding</keyword>
<keyword id="KW-0548">Nucleotidyltransferase</keyword>
<keyword id="KW-0808">Transferase</keyword>
<name>GLGC_CLOB8</name>
<gene>
    <name evidence="1" type="primary">glgC</name>
    <name type="ordered locus">Cbei_4905</name>
</gene>
<evidence type="ECO:0000255" key="1">
    <source>
        <dbReference type="HAMAP-Rule" id="MF_00624"/>
    </source>
</evidence>
<sequence length="386" mass="43045">MGKNEIVAMILAGGQGSRLGVLTKKLAKPAVPFGGKYRIIDFPLSNCSNSGIYTVGVLTQYKPLELNAHIGIGEAWDLDRAHGGVHVLPPYQEEKGGEWYKGTANAIYQNIEFVDRYDPEYILILSGDHIYKMDYTKMLDFHKEKQAEATIAVIEVPMDEASRFGIMNTREDLSIYEFEEKPKNPKNNLASMGIYIFNWKTLKKYLREDESDKTSKNDFGMNIIPSMLGNGNKMVAYPFKGYWKDVGTIDSLWEANMDLIREDNELDLHDEEWKIYSVNPVRPAQYIGENAKVSNSLVVEGCVVNGQVESSILFQGVQIGKNSVVRDSIIMTDAKIGDNVVIEKAIVGSGAIVRKDCKISLGDEIAIIAAKEEVKMGTVIENNKAV</sequence>
<reference key="1">
    <citation type="submission" date="2007-06" db="EMBL/GenBank/DDBJ databases">
        <title>Complete sequence of Clostridium beijerinckii NCIMB 8052.</title>
        <authorList>
            <consortium name="US DOE Joint Genome Institute"/>
            <person name="Copeland A."/>
            <person name="Lucas S."/>
            <person name="Lapidus A."/>
            <person name="Barry K."/>
            <person name="Detter J.C."/>
            <person name="Glavina del Rio T."/>
            <person name="Hammon N."/>
            <person name="Israni S."/>
            <person name="Dalin E."/>
            <person name="Tice H."/>
            <person name="Pitluck S."/>
            <person name="Sims D."/>
            <person name="Brettin T."/>
            <person name="Bruce D."/>
            <person name="Tapia R."/>
            <person name="Brainard J."/>
            <person name="Schmutz J."/>
            <person name="Larimer F."/>
            <person name="Land M."/>
            <person name="Hauser L."/>
            <person name="Kyrpides N."/>
            <person name="Mikhailova N."/>
            <person name="Bennet G."/>
            <person name="Cann I."/>
            <person name="Chen J.-S."/>
            <person name="Contreras A.L."/>
            <person name="Jones D."/>
            <person name="Kashket E."/>
            <person name="Mitchell W."/>
            <person name="Stoddard S."/>
            <person name="Schwarz W."/>
            <person name="Qureshi N."/>
            <person name="Young M."/>
            <person name="Shi Z."/>
            <person name="Ezeji T."/>
            <person name="White B."/>
            <person name="Blaschek H."/>
            <person name="Richardson P."/>
        </authorList>
    </citation>
    <scope>NUCLEOTIDE SEQUENCE [LARGE SCALE GENOMIC DNA]</scope>
    <source>
        <strain>ATCC 51743 / NCIMB 8052</strain>
    </source>
</reference>
<dbReference type="EC" id="2.7.7.27" evidence="1"/>
<dbReference type="EMBL" id="CP000721">
    <property type="protein sequence ID" value="ABR37011.1"/>
    <property type="molecule type" value="Genomic_DNA"/>
</dbReference>
<dbReference type="RefSeq" id="WP_012061055.1">
    <property type="nucleotide sequence ID" value="NC_009617.1"/>
</dbReference>
<dbReference type="SMR" id="A6M331"/>
<dbReference type="GeneID" id="66347803"/>
<dbReference type="KEGG" id="cbe:Cbei_4905"/>
<dbReference type="eggNOG" id="COG0448">
    <property type="taxonomic scope" value="Bacteria"/>
</dbReference>
<dbReference type="HOGENOM" id="CLU_029499_14_0_9"/>
<dbReference type="UniPathway" id="UPA00164"/>
<dbReference type="Proteomes" id="UP000000565">
    <property type="component" value="Chromosome"/>
</dbReference>
<dbReference type="GO" id="GO:0005524">
    <property type="term" value="F:ATP binding"/>
    <property type="evidence" value="ECO:0007669"/>
    <property type="project" value="UniProtKB-KW"/>
</dbReference>
<dbReference type="GO" id="GO:0008878">
    <property type="term" value="F:glucose-1-phosphate adenylyltransferase activity"/>
    <property type="evidence" value="ECO:0007669"/>
    <property type="project" value="UniProtKB-UniRule"/>
</dbReference>
<dbReference type="GO" id="GO:0005978">
    <property type="term" value="P:glycogen biosynthetic process"/>
    <property type="evidence" value="ECO:0007669"/>
    <property type="project" value="UniProtKB-UniRule"/>
</dbReference>
<dbReference type="CDD" id="cd02508">
    <property type="entry name" value="ADP_Glucose_PP"/>
    <property type="match status" value="1"/>
</dbReference>
<dbReference type="CDD" id="cd04651">
    <property type="entry name" value="LbH_G1P_AT_C"/>
    <property type="match status" value="1"/>
</dbReference>
<dbReference type="Gene3D" id="2.160.10.10">
    <property type="entry name" value="Hexapeptide repeat proteins"/>
    <property type="match status" value="1"/>
</dbReference>
<dbReference type="Gene3D" id="3.90.550.10">
    <property type="entry name" value="Spore Coat Polysaccharide Biosynthesis Protein SpsA, Chain A"/>
    <property type="match status" value="1"/>
</dbReference>
<dbReference type="HAMAP" id="MF_00624">
    <property type="entry name" value="GlgC"/>
    <property type="match status" value="1"/>
</dbReference>
<dbReference type="InterPro" id="IPR011831">
    <property type="entry name" value="ADP-Glc_PPase"/>
</dbReference>
<dbReference type="InterPro" id="IPR005836">
    <property type="entry name" value="ADP_Glu_pyroP_CS"/>
</dbReference>
<dbReference type="InterPro" id="IPR023049">
    <property type="entry name" value="GlgC_bac"/>
</dbReference>
<dbReference type="InterPro" id="IPR056818">
    <property type="entry name" value="GlmU/GlgC-like_hexapep"/>
</dbReference>
<dbReference type="InterPro" id="IPR005835">
    <property type="entry name" value="NTP_transferase_dom"/>
</dbReference>
<dbReference type="InterPro" id="IPR029044">
    <property type="entry name" value="Nucleotide-diphossugar_trans"/>
</dbReference>
<dbReference type="InterPro" id="IPR011004">
    <property type="entry name" value="Trimer_LpxA-like_sf"/>
</dbReference>
<dbReference type="NCBIfam" id="TIGR02091">
    <property type="entry name" value="glgC"/>
    <property type="match status" value="1"/>
</dbReference>
<dbReference type="NCBIfam" id="NF003670">
    <property type="entry name" value="PRK05293.1"/>
    <property type="match status" value="1"/>
</dbReference>
<dbReference type="PANTHER" id="PTHR43523:SF2">
    <property type="entry name" value="GLUCOSE-1-PHOSPHATE ADENYLYLTRANSFERASE"/>
    <property type="match status" value="1"/>
</dbReference>
<dbReference type="PANTHER" id="PTHR43523">
    <property type="entry name" value="GLUCOSE-1-PHOSPHATE ADENYLYLTRANSFERASE-RELATED"/>
    <property type="match status" value="1"/>
</dbReference>
<dbReference type="Pfam" id="PF24894">
    <property type="entry name" value="Hexapep_GlmU"/>
    <property type="match status" value="1"/>
</dbReference>
<dbReference type="Pfam" id="PF00483">
    <property type="entry name" value="NTP_transferase"/>
    <property type="match status" value="1"/>
</dbReference>
<dbReference type="SUPFAM" id="SSF53448">
    <property type="entry name" value="Nucleotide-diphospho-sugar transferases"/>
    <property type="match status" value="1"/>
</dbReference>
<dbReference type="SUPFAM" id="SSF51161">
    <property type="entry name" value="Trimeric LpxA-like enzymes"/>
    <property type="match status" value="1"/>
</dbReference>
<dbReference type="PROSITE" id="PS00808">
    <property type="entry name" value="ADP_GLC_PYROPHOSPH_1"/>
    <property type="match status" value="1"/>
</dbReference>
<dbReference type="PROSITE" id="PS00809">
    <property type="entry name" value="ADP_GLC_PYROPHOSPH_2"/>
    <property type="match status" value="1"/>
</dbReference>
<dbReference type="PROSITE" id="PS00810">
    <property type="entry name" value="ADP_GLC_PYROPHOSPH_3"/>
    <property type="match status" value="1"/>
</dbReference>
<organism>
    <name type="scientific">Clostridium beijerinckii (strain ATCC 51743 / NCIMB 8052)</name>
    <name type="common">Clostridium acetobutylicum</name>
    <dbReference type="NCBI Taxonomy" id="290402"/>
    <lineage>
        <taxon>Bacteria</taxon>
        <taxon>Bacillati</taxon>
        <taxon>Bacillota</taxon>
        <taxon>Clostridia</taxon>
        <taxon>Eubacteriales</taxon>
        <taxon>Clostridiaceae</taxon>
        <taxon>Clostridium</taxon>
    </lineage>
</organism>
<feature type="chain" id="PRO_1000082593" description="Glucose-1-phosphate adenylyltransferase">
    <location>
        <begin position="1"/>
        <end position="386"/>
    </location>
</feature>
<feature type="binding site" evidence="1">
    <location>
        <position position="100"/>
    </location>
    <ligand>
        <name>alpha-D-glucose 1-phosphate</name>
        <dbReference type="ChEBI" id="CHEBI:58601"/>
    </ligand>
</feature>
<feature type="binding site" evidence="1">
    <location>
        <position position="165"/>
    </location>
    <ligand>
        <name>alpha-D-glucose 1-phosphate</name>
        <dbReference type="ChEBI" id="CHEBI:58601"/>
    </ligand>
</feature>
<feature type="binding site" evidence="1">
    <location>
        <begin position="180"/>
        <end position="181"/>
    </location>
    <ligand>
        <name>alpha-D-glucose 1-phosphate</name>
        <dbReference type="ChEBI" id="CHEBI:58601"/>
    </ligand>
</feature>
<feature type="binding site" evidence="1">
    <location>
        <position position="191"/>
    </location>
    <ligand>
        <name>alpha-D-glucose 1-phosphate</name>
        <dbReference type="ChEBI" id="CHEBI:58601"/>
    </ligand>
</feature>